<organism>
    <name type="scientific">Mus musculus</name>
    <name type="common">Mouse</name>
    <dbReference type="NCBI Taxonomy" id="10090"/>
    <lineage>
        <taxon>Eukaryota</taxon>
        <taxon>Metazoa</taxon>
        <taxon>Chordata</taxon>
        <taxon>Craniata</taxon>
        <taxon>Vertebrata</taxon>
        <taxon>Euteleostomi</taxon>
        <taxon>Mammalia</taxon>
        <taxon>Eutheria</taxon>
        <taxon>Euarchontoglires</taxon>
        <taxon>Glires</taxon>
        <taxon>Rodentia</taxon>
        <taxon>Myomorpha</taxon>
        <taxon>Muroidea</taxon>
        <taxon>Muridae</taxon>
        <taxon>Murinae</taxon>
        <taxon>Mus</taxon>
        <taxon>Mus</taxon>
    </lineage>
</organism>
<proteinExistence type="evidence at protein level"/>
<feature type="signal peptide" evidence="2">
    <location>
        <begin position="1"/>
        <end position="32"/>
    </location>
</feature>
<feature type="chain" id="PRO_0000006380" description="Protein CutA">
    <location>
        <begin position="33"/>
        <end position="177"/>
    </location>
</feature>
<feature type="splice variant" id="VSP_013227" description="In isoform 2." evidence="3">
    <original>MIKTQSSLVPALTEFVR</original>
    <variation>VRKFPPCLAPLTTLALS</variation>
    <location>
        <begin position="120"/>
        <end position="136"/>
    </location>
</feature>
<feature type="splice variant" id="VSP_013228" description="In isoform 2." evidence="3">
    <location>
        <begin position="137"/>
        <end position="177"/>
    </location>
</feature>
<feature type="sequence conflict" description="In Ref. 1; BAE35000." evidence="4" ref="1">
    <original>V</original>
    <variation>L</variation>
    <location>
        <position position="143"/>
    </location>
</feature>
<comment type="subunit">
    <text evidence="1">Homotrimer.</text>
</comment>
<comment type="alternative products">
    <event type="alternative splicing"/>
    <isoform>
        <id>Q9CQ89-1</id>
        <name>1</name>
        <sequence type="displayed"/>
    </isoform>
    <isoform>
        <id>Q9CQ89-3</id>
        <name>2</name>
        <sequence type="described" ref="VSP_013227 VSP_013228"/>
    </isoform>
</comment>
<comment type="miscellaneous">
    <molecule>Isoform 2</molecule>
    <text evidence="4">Due to intron retention.</text>
</comment>
<comment type="similarity">
    <text evidence="4">Belongs to the CutA family.</text>
</comment>
<comment type="sequence caution" evidence="4">
    <conflict type="erroneous initiation">
        <sequence resource="EMBL-CDS" id="BAB22389"/>
    </conflict>
</comment>
<comment type="sequence caution" evidence="4">
    <conflict type="erroneous initiation">
        <sequence resource="EMBL-CDS" id="BAB22913"/>
    </conflict>
</comment>
<comment type="sequence caution" evidence="4">
    <conflict type="erroneous initiation">
        <sequence resource="EMBL-CDS" id="BAE35000"/>
    </conflict>
</comment>
<reference key="1">
    <citation type="journal article" date="2005" name="Science">
        <title>The transcriptional landscape of the mammalian genome.</title>
        <authorList>
            <person name="Carninci P."/>
            <person name="Kasukawa T."/>
            <person name="Katayama S."/>
            <person name="Gough J."/>
            <person name="Frith M.C."/>
            <person name="Maeda N."/>
            <person name="Oyama R."/>
            <person name="Ravasi T."/>
            <person name="Lenhard B."/>
            <person name="Wells C."/>
            <person name="Kodzius R."/>
            <person name="Shimokawa K."/>
            <person name="Bajic V.B."/>
            <person name="Brenner S.E."/>
            <person name="Batalov S."/>
            <person name="Forrest A.R."/>
            <person name="Zavolan M."/>
            <person name="Davis M.J."/>
            <person name="Wilming L.G."/>
            <person name="Aidinis V."/>
            <person name="Allen J.E."/>
            <person name="Ambesi-Impiombato A."/>
            <person name="Apweiler R."/>
            <person name="Aturaliya R.N."/>
            <person name="Bailey T.L."/>
            <person name="Bansal M."/>
            <person name="Baxter L."/>
            <person name="Beisel K.W."/>
            <person name="Bersano T."/>
            <person name="Bono H."/>
            <person name="Chalk A.M."/>
            <person name="Chiu K.P."/>
            <person name="Choudhary V."/>
            <person name="Christoffels A."/>
            <person name="Clutterbuck D.R."/>
            <person name="Crowe M.L."/>
            <person name="Dalla E."/>
            <person name="Dalrymple B.P."/>
            <person name="de Bono B."/>
            <person name="Della Gatta G."/>
            <person name="di Bernardo D."/>
            <person name="Down T."/>
            <person name="Engstrom P."/>
            <person name="Fagiolini M."/>
            <person name="Faulkner G."/>
            <person name="Fletcher C.F."/>
            <person name="Fukushima T."/>
            <person name="Furuno M."/>
            <person name="Futaki S."/>
            <person name="Gariboldi M."/>
            <person name="Georgii-Hemming P."/>
            <person name="Gingeras T.R."/>
            <person name="Gojobori T."/>
            <person name="Green R.E."/>
            <person name="Gustincich S."/>
            <person name="Harbers M."/>
            <person name="Hayashi Y."/>
            <person name="Hensch T.K."/>
            <person name="Hirokawa N."/>
            <person name="Hill D."/>
            <person name="Huminiecki L."/>
            <person name="Iacono M."/>
            <person name="Ikeo K."/>
            <person name="Iwama A."/>
            <person name="Ishikawa T."/>
            <person name="Jakt M."/>
            <person name="Kanapin A."/>
            <person name="Katoh M."/>
            <person name="Kawasawa Y."/>
            <person name="Kelso J."/>
            <person name="Kitamura H."/>
            <person name="Kitano H."/>
            <person name="Kollias G."/>
            <person name="Krishnan S.P."/>
            <person name="Kruger A."/>
            <person name="Kummerfeld S.K."/>
            <person name="Kurochkin I.V."/>
            <person name="Lareau L.F."/>
            <person name="Lazarevic D."/>
            <person name="Lipovich L."/>
            <person name="Liu J."/>
            <person name="Liuni S."/>
            <person name="McWilliam S."/>
            <person name="Madan Babu M."/>
            <person name="Madera M."/>
            <person name="Marchionni L."/>
            <person name="Matsuda H."/>
            <person name="Matsuzawa S."/>
            <person name="Miki H."/>
            <person name="Mignone F."/>
            <person name="Miyake S."/>
            <person name="Morris K."/>
            <person name="Mottagui-Tabar S."/>
            <person name="Mulder N."/>
            <person name="Nakano N."/>
            <person name="Nakauchi H."/>
            <person name="Ng P."/>
            <person name="Nilsson R."/>
            <person name="Nishiguchi S."/>
            <person name="Nishikawa S."/>
            <person name="Nori F."/>
            <person name="Ohara O."/>
            <person name="Okazaki Y."/>
            <person name="Orlando V."/>
            <person name="Pang K.C."/>
            <person name="Pavan W.J."/>
            <person name="Pavesi G."/>
            <person name="Pesole G."/>
            <person name="Petrovsky N."/>
            <person name="Piazza S."/>
            <person name="Reed J."/>
            <person name="Reid J.F."/>
            <person name="Ring B.Z."/>
            <person name="Ringwald M."/>
            <person name="Rost B."/>
            <person name="Ruan Y."/>
            <person name="Salzberg S.L."/>
            <person name="Sandelin A."/>
            <person name="Schneider C."/>
            <person name="Schoenbach C."/>
            <person name="Sekiguchi K."/>
            <person name="Semple C.A."/>
            <person name="Seno S."/>
            <person name="Sessa L."/>
            <person name="Sheng Y."/>
            <person name="Shibata Y."/>
            <person name="Shimada H."/>
            <person name="Shimada K."/>
            <person name="Silva D."/>
            <person name="Sinclair B."/>
            <person name="Sperling S."/>
            <person name="Stupka E."/>
            <person name="Sugiura K."/>
            <person name="Sultana R."/>
            <person name="Takenaka Y."/>
            <person name="Taki K."/>
            <person name="Tammoja K."/>
            <person name="Tan S.L."/>
            <person name="Tang S."/>
            <person name="Taylor M.S."/>
            <person name="Tegner J."/>
            <person name="Teichmann S.A."/>
            <person name="Ueda H.R."/>
            <person name="van Nimwegen E."/>
            <person name="Verardo R."/>
            <person name="Wei C.L."/>
            <person name="Yagi K."/>
            <person name="Yamanishi H."/>
            <person name="Zabarovsky E."/>
            <person name="Zhu S."/>
            <person name="Zimmer A."/>
            <person name="Hide W."/>
            <person name="Bult C."/>
            <person name="Grimmond S.M."/>
            <person name="Teasdale R.D."/>
            <person name="Liu E.T."/>
            <person name="Brusic V."/>
            <person name="Quackenbush J."/>
            <person name="Wahlestedt C."/>
            <person name="Mattick J.S."/>
            <person name="Hume D.A."/>
            <person name="Kai C."/>
            <person name="Sasaki D."/>
            <person name="Tomaru Y."/>
            <person name="Fukuda S."/>
            <person name="Kanamori-Katayama M."/>
            <person name="Suzuki M."/>
            <person name="Aoki J."/>
            <person name="Arakawa T."/>
            <person name="Iida J."/>
            <person name="Imamura K."/>
            <person name="Itoh M."/>
            <person name="Kato T."/>
            <person name="Kawaji H."/>
            <person name="Kawagashira N."/>
            <person name="Kawashima T."/>
            <person name="Kojima M."/>
            <person name="Kondo S."/>
            <person name="Konno H."/>
            <person name="Nakano K."/>
            <person name="Ninomiya N."/>
            <person name="Nishio T."/>
            <person name="Okada M."/>
            <person name="Plessy C."/>
            <person name="Shibata K."/>
            <person name="Shiraki T."/>
            <person name="Suzuki S."/>
            <person name="Tagami M."/>
            <person name="Waki K."/>
            <person name="Watahiki A."/>
            <person name="Okamura-Oho Y."/>
            <person name="Suzuki H."/>
            <person name="Kawai J."/>
            <person name="Hayashizaki Y."/>
        </authorList>
    </citation>
    <scope>NUCLEOTIDE SEQUENCE [LARGE SCALE MRNA] (ISOFORM 1)</scope>
    <source>
        <strain>C57BL/6J</strain>
        <tissue>Embryo</tissue>
        <tissue>Kidney</tissue>
    </source>
</reference>
<reference key="2">
    <citation type="journal article" date="2004" name="Genome Res.">
        <title>The status, quality, and expansion of the NIH full-length cDNA project: the Mammalian Gene Collection (MGC).</title>
        <authorList>
            <consortium name="The MGC Project Team"/>
        </authorList>
    </citation>
    <scope>NUCLEOTIDE SEQUENCE [LARGE SCALE MRNA] (ISOFORM 1)</scope>
    <scope>NUCLEOTIDE SEQUENCE [LARGE SCALE MRNA] OF 15-177 (ISOFORM 2)</scope>
    <source>
        <strain>Czech II</strain>
        <strain>FVB/N-3</strain>
        <tissue>Lung</tissue>
        <tissue>Mammary tumor</tissue>
    </source>
</reference>
<reference key="3">
    <citation type="journal article" date="2010" name="Cell">
        <title>A tissue-specific atlas of mouse protein phosphorylation and expression.</title>
        <authorList>
            <person name="Huttlin E.L."/>
            <person name="Jedrychowski M.P."/>
            <person name="Elias J.E."/>
            <person name="Goswami T."/>
            <person name="Rad R."/>
            <person name="Beausoleil S.A."/>
            <person name="Villen J."/>
            <person name="Haas W."/>
            <person name="Sowa M.E."/>
            <person name="Gygi S.P."/>
        </authorList>
    </citation>
    <scope>IDENTIFICATION BY MASS SPECTROMETRY [LARGE SCALE ANALYSIS]</scope>
    <source>
        <tissue>Brain</tissue>
        <tissue>Brown adipose tissue</tissue>
        <tissue>Heart</tissue>
        <tissue>Kidney</tissue>
        <tissue>Liver</tissue>
        <tissue>Lung</tissue>
        <tissue>Pancreas</tissue>
        <tissue>Spleen</tissue>
        <tissue>Testis</tissue>
    </source>
</reference>
<protein>
    <recommendedName>
        <fullName>Protein CutA</fullName>
    </recommendedName>
    <alternativeName>
        <fullName>Brain acetylcholinesterase putative membrane anchor</fullName>
    </alternativeName>
</protein>
<evidence type="ECO:0000250" key="1"/>
<evidence type="ECO:0000255" key="2"/>
<evidence type="ECO:0000303" key="3">
    <source>
    </source>
</evidence>
<evidence type="ECO:0000305" key="4"/>
<dbReference type="EMBL" id="AK002828">
    <property type="protein sequence ID" value="BAB22389.2"/>
    <property type="status" value="ALT_INIT"/>
    <property type="molecule type" value="mRNA"/>
</dbReference>
<dbReference type="EMBL" id="AK003647">
    <property type="protein sequence ID" value="BAB22913.2"/>
    <property type="status" value="ALT_INIT"/>
    <property type="molecule type" value="mRNA"/>
</dbReference>
<dbReference type="EMBL" id="AK004197">
    <property type="protein sequence ID" value="BAB23217.3"/>
    <property type="molecule type" value="mRNA"/>
</dbReference>
<dbReference type="EMBL" id="AK159336">
    <property type="protein sequence ID" value="BAE35000.1"/>
    <property type="status" value="ALT_INIT"/>
    <property type="molecule type" value="mRNA"/>
</dbReference>
<dbReference type="EMBL" id="BC024422">
    <property type="protein sequence ID" value="AAH24422.2"/>
    <property type="molecule type" value="mRNA"/>
</dbReference>
<dbReference type="EMBL" id="BC037500">
    <property type="protein sequence ID" value="AAH37500.1"/>
    <property type="status" value="ALT_SEQ"/>
    <property type="molecule type" value="mRNA"/>
</dbReference>
<dbReference type="CCDS" id="CCDS28557.1">
    <molecule id="Q9CQ89-1"/>
</dbReference>
<dbReference type="RefSeq" id="NP_080583.3">
    <molecule id="Q9CQ89-1"/>
    <property type="nucleotide sequence ID" value="NM_026307.3"/>
</dbReference>
<dbReference type="RefSeq" id="NP_081224.1">
    <property type="nucleotide sequence ID" value="NM_026948.3"/>
</dbReference>
<dbReference type="SMR" id="Q9CQ89"/>
<dbReference type="BioGRID" id="212358">
    <property type="interactions" value="10"/>
</dbReference>
<dbReference type="FunCoup" id="Q9CQ89">
    <property type="interactions" value="464"/>
</dbReference>
<dbReference type="STRING" id="10090.ENSMUSP00000025027"/>
<dbReference type="GlyGen" id="Q9CQ89">
    <property type="glycosylation" value="1 site, 1 O-linked glycan (1 site)"/>
</dbReference>
<dbReference type="PhosphoSitePlus" id="Q9CQ89"/>
<dbReference type="SwissPalm" id="Q9CQ89"/>
<dbReference type="jPOST" id="Q9CQ89"/>
<dbReference type="PaxDb" id="10090-ENSMUSP00000025027"/>
<dbReference type="PeptideAtlas" id="Q9CQ89"/>
<dbReference type="ProteomicsDB" id="285232">
    <molecule id="Q9CQ89-1"/>
</dbReference>
<dbReference type="ProteomicsDB" id="285233">
    <molecule id="Q9CQ89-3"/>
</dbReference>
<dbReference type="Pumba" id="Q9CQ89"/>
<dbReference type="Antibodypedia" id="29177">
    <property type="antibodies" value="173 antibodies from 25 providers"/>
</dbReference>
<dbReference type="DNASU" id="67675"/>
<dbReference type="Ensembl" id="ENSMUST00000025027.10">
    <molecule id="Q9CQ89-1"/>
    <property type="protein sequence ID" value="ENSMUSP00000025027.9"/>
    <property type="gene ID" value="ENSMUSG00000024194.17"/>
</dbReference>
<dbReference type="GeneID" id="67675"/>
<dbReference type="KEGG" id="mmu:67675"/>
<dbReference type="UCSC" id="uc008bex.2">
    <molecule id="Q9CQ89-1"/>
    <property type="organism name" value="mouse"/>
</dbReference>
<dbReference type="AGR" id="MGI:1914925"/>
<dbReference type="CTD" id="51596"/>
<dbReference type="MGI" id="MGI:1914925">
    <property type="gene designation" value="Cuta"/>
</dbReference>
<dbReference type="VEuPathDB" id="HostDB:ENSMUSG00000024194"/>
<dbReference type="eggNOG" id="KOG3338">
    <property type="taxonomic scope" value="Eukaryota"/>
</dbReference>
<dbReference type="GeneTree" id="ENSGT00390000017030"/>
<dbReference type="InParanoid" id="Q9CQ89"/>
<dbReference type="OMA" id="SCLWMPA"/>
<dbReference type="PhylomeDB" id="Q9CQ89"/>
<dbReference type="TreeFam" id="TF313269"/>
<dbReference type="BioGRID-ORCS" id="67675">
    <property type="hits" value="5 hits in 78 CRISPR screens"/>
</dbReference>
<dbReference type="ChiTaRS" id="Cuta">
    <property type="organism name" value="mouse"/>
</dbReference>
<dbReference type="PRO" id="PR:Q9CQ89"/>
<dbReference type="Proteomes" id="UP000000589">
    <property type="component" value="Chromosome 17"/>
</dbReference>
<dbReference type="RNAct" id="Q9CQ89">
    <property type="molecule type" value="protein"/>
</dbReference>
<dbReference type="Bgee" id="ENSMUSG00000024194">
    <property type="expression patterns" value="Expressed in ectoplacental cone and 257 other cell types or tissues"/>
</dbReference>
<dbReference type="ExpressionAtlas" id="Q9CQ89">
    <property type="expression patterns" value="baseline and differential"/>
</dbReference>
<dbReference type="GO" id="GO:0016020">
    <property type="term" value="C:membrane"/>
    <property type="evidence" value="ECO:0007669"/>
    <property type="project" value="Ensembl"/>
</dbReference>
<dbReference type="GO" id="GO:0005739">
    <property type="term" value="C:mitochondrion"/>
    <property type="evidence" value="ECO:0007669"/>
    <property type="project" value="Ensembl"/>
</dbReference>
<dbReference type="GO" id="GO:0019899">
    <property type="term" value="F:enzyme binding"/>
    <property type="evidence" value="ECO:0007669"/>
    <property type="project" value="Ensembl"/>
</dbReference>
<dbReference type="GO" id="GO:0008104">
    <property type="term" value="P:protein localization"/>
    <property type="evidence" value="ECO:0007669"/>
    <property type="project" value="Ensembl"/>
</dbReference>
<dbReference type="GO" id="GO:0010038">
    <property type="term" value="P:response to metal ion"/>
    <property type="evidence" value="ECO:0007669"/>
    <property type="project" value="InterPro"/>
</dbReference>
<dbReference type="FunFam" id="3.30.70.120:FF:000005">
    <property type="entry name" value="CUTA isoform 1"/>
    <property type="match status" value="1"/>
</dbReference>
<dbReference type="Gene3D" id="3.30.70.120">
    <property type="match status" value="1"/>
</dbReference>
<dbReference type="InterPro" id="IPR004323">
    <property type="entry name" value="Ion_tolerance_CutA"/>
</dbReference>
<dbReference type="InterPro" id="IPR011322">
    <property type="entry name" value="N-reg_PII-like_a/b"/>
</dbReference>
<dbReference type="InterPro" id="IPR015867">
    <property type="entry name" value="N-reg_PII/ATP_PRibTrfase_C"/>
</dbReference>
<dbReference type="PANTHER" id="PTHR23419">
    <property type="entry name" value="DIVALENT CATION TOLERANCE CUTA-RELATED"/>
    <property type="match status" value="1"/>
</dbReference>
<dbReference type="PANTHER" id="PTHR23419:SF1">
    <property type="entry name" value="PROTEIN CUTA"/>
    <property type="match status" value="1"/>
</dbReference>
<dbReference type="Pfam" id="PF03091">
    <property type="entry name" value="CutA1"/>
    <property type="match status" value="1"/>
</dbReference>
<dbReference type="SUPFAM" id="SSF54913">
    <property type="entry name" value="GlnB-like"/>
    <property type="match status" value="1"/>
</dbReference>
<accession>Q9CQ89</accession>
<accession>Q3TXB6</accession>
<accession>Q8CI44</accession>
<accession>Q9D1L4</accession>
<sequence>MNWGRAPGVLLGGGATLLLSFLWMPALLPVASRLLLLPRALLSMASGSPPSQPPPASGSGYVPGSVSAAFVTCPNEKVAKEIARAVVEKRLAACVNLIPQITSIYEWKGKIEEDSEVLMMIKTQSSLVPALTEFVRSVHPYEVAEVIALPVEQGNPPYLHWVHQVTESVSNSGTALP</sequence>
<name>CUTA_MOUSE</name>
<gene>
    <name type="primary">Cuta</name>
</gene>
<keyword id="KW-0025">Alternative splicing</keyword>
<keyword id="KW-1185">Reference proteome</keyword>
<keyword id="KW-0732">Signal</keyword>